<evidence type="ECO:0000255" key="1">
    <source>
        <dbReference type="HAMAP-Rule" id="MF_01007"/>
    </source>
</evidence>
<evidence type="ECO:0000256" key="2">
    <source>
        <dbReference type="SAM" id="MobiDB-lite"/>
    </source>
</evidence>
<organism>
    <name type="scientific">Bifidobacterium longum subsp. infantis (strain ATCC 15697 / DSM 20088 / JCM 1222 / NCTC 11817 / S12)</name>
    <dbReference type="NCBI Taxonomy" id="391904"/>
    <lineage>
        <taxon>Bacteria</taxon>
        <taxon>Bacillati</taxon>
        <taxon>Actinomycetota</taxon>
        <taxon>Actinomycetes</taxon>
        <taxon>Bifidobacteriales</taxon>
        <taxon>Bifidobacteriaceae</taxon>
        <taxon>Bifidobacterium</taxon>
    </lineage>
</organism>
<comment type="function">
    <text evidence="1">Specifically methylates the N4 position of cytidine in position 1402 (C1402) of 16S rRNA.</text>
</comment>
<comment type="catalytic activity">
    <reaction evidence="1">
        <text>cytidine(1402) in 16S rRNA + S-adenosyl-L-methionine = N(4)-methylcytidine(1402) in 16S rRNA + S-adenosyl-L-homocysteine + H(+)</text>
        <dbReference type="Rhea" id="RHEA:42928"/>
        <dbReference type="Rhea" id="RHEA-COMP:10286"/>
        <dbReference type="Rhea" id="RHEA-COMP:10287"/>
        <dbReference type="ChEBI" id="CHEBI:15378"/>
        <dbReference type="ChEBI" id="CHEBI:57856"/>
        <dbReference type="ChEBI" id="CHEBI:59789"/>
        <dbReference type="ChEBI" id="CHEBI:74506"/>
        <dbReference type="ChEBI" id="CHEBI:82748"/>
        <dbReference type="EC" id="2.1.1.199"/>
    </reaction>
</comment>
<comment type="subcellular location">
    <subcellularLocation>
        <location evidence="1">Cytoplasm</location>
    </subcellularLocation>
</comment>
<comment type="similarity">
    <text evidence="1">Belongs to the methyltransferase superfamily. RsmH family.</text>
</comment>
<proteinExistence type="inferred from homology"/>
<sequence length="359" mass="39612">MVDVANIHLPVLLDDCVNLMAPALEHENAVAVDCTLGLAGHSIAFLKTAPQARLIGIDRDSEALGLAAERMEREGLADRFIPVHAAFDQLDQVLTDRGIERVDAVFMDLGLSSLQIDETDRGFSYSHDAPLDMRMDVSQPLTAERILATYDAAELVRIFKEYGEERFSRQIARAIVAHRDKEPFTTTAQLNRLVDEVVPQAHRPAGNPAKRVFQALRIEVNGELDKLASTLPQAANRLHVGGRLVVESYHSLEDKTVKSFMAQGLRVDVPAGLPVIPPDAQPFFTDLTRGAIKADEHEIAANPRSASVRLRAVEVSRDIPSRWRKRFTQTAQGLNDINIQGSASPGRAKNTARIRTRRG</sequence>
<accession>B7GQ70</accession>
<accession>E8MR32</accession>
<gene>
    <name evidence="1" type="primary">rsmH</name>
    <name type="synonym">mraW</name>
    <name type="ordered locus">Blon_0848</name>
    <name type="ordered locus">BLIJ_0865</name>
</gene>
<keyword id="KW-0963">Cytoplasm</keyword>
<keyword id="KW-0489">Methyltransferase</keyword>
<keyword id="KW-0698">rRNA processing</keyword>
<keyword id="KW-0949">S-adenosyl-L-methionine</keyword>
<keyword id="KW-0808">Transferase</keyword>
<feature type="chain" id="PRO_0000386750" description="Ribosomal RNA small subunit methyltransferase H">
    <location>
        <begin position="1"/>
        <end position="359"/>
    </location>
</feature>
<feature type="region of interest" description="Disordered" evidence="2">
    <location>
        <begin position="339"/>
        <end position="359"/>
    </location>
</feature>
<feature type="compositionally biased region" description="Basic residues" evidence="2">
    <location>
        <begin position="350"/>
        <end position="359"/>
    </location>
</feature>
<feature type="binding site" evidence="1">
    <location>
        <begin position="39"/>
        <end position="41"/>
    </location>
    <ligand>
        <name>S-adenosyl-L-methionine</name>
        <dbReference type="ChEBI" id="CHEBI:59789"/>
    </ligand>
</feature>
<feature type="binding site" evidence="1">
    <location>
        <position position="58"/>
    </location>
    <ligand>
        <name>S-adenosyl-L-methionine</name>
        <dbReference type="ChEBI" id="CHEBI:59789"/>
    </ligand>
</feature>
<feature type="binding site" evidence="1">
    <location>
        <position position="87"/>
    </location>
    <ligand>
        <name>S-adenosyl-L-methionine</name>
        <dbReference type="ChEBI" id="CHEBI:59789"/>
    </ligand>
</feature>
<feature type="binding site" evidence="1">
    <location>
        <position position="108"/>
    </location>
    <ligand>
        <name>S-adenosyl-L-methionine</name>
        <dbReference type="ChEBI" id="CHEBI:59789"/>
    </ligand>
</feature>
<feature type="binding site" evidence="1">
    <location>
        <position position="115"/>
    </location>
    <ligand>
        <name>S-adenosyl-L-methionine</name>
        <dbReference type="ChEBI" id="CHEBI:59789"/>
    </ligand>
</feature>
<name>RSMH_BIFLS</name>
<reference key="1">
    <citation type="journal article" date="2008" name="Proc. Natl. Acad. Sci. U.S.A.">
        <title>The genome sequence of Bifidobacterium longum subsp. infantis reveals adaptations for milk utilization within the infant microbiome.</title>
        <authorList>
            <person name="Sela D.A."/>
            <person name="Chapman J."/>
            <person name="Adeuya A."/>
            <person name="Kim J.H."/>
            <person name="Chen F."/>
            <person name="Whitehead T.R."/>
            <person name="Lapidus A."/>
            <person name="Rokhsar D.S."/>
            <person name="Lebrilla C.B."/>
            <person name="German J.B."/>
            <person name="Price N.P."/>
            <person name="Richardson P.M."/>
            <person name="Mills D.A."/>
        </authorList>
    </citation>
    <scope>NUCLEOTIDE SEQUENCE [LARGE SCALE GENOMIC DNA]</scope>
    <source>
        <strain>ATCC 15697 / DSM 20088 / JCM 1222 / NCTC 11817 / S12</strain>
    </source>
</reference>
<reference key="2">
    <citation type="journal article" date="2011" name="Nature">
        <title>Bifidobacteria can protect from enteropathogenic infection through production of acetate.</title>
        <authorList>
            <person name="Fukuda S."/>
            <person name="Toh H."/>
            <person name="Hase K."/>
            <person name="Oshima K."/>
            <person name="Nakanishi Y."/>
            <person name="Yoshimura K."/>
            <person name="Tobe T."/>
            <person name="Clarke J.M."/>
            <person name="Topping D.L."/>
            <person name="Suzuki T."/>
            <person name="Taylor T.D."/>
            <person name="Itoh K."/>
            <person name="Kikuchi J."/>
            <person name="Morita H."/>
            <person name="Hattori M."/>
            <person name="Ohno H."/>
        </authorList>
    </citation>
    <scope>NUCLEOTIDE SEQUENCE [LARGE SCALE GENOMIC DNA]</scope>
    <source>
        <strain>ATCC 15697 / DSM 20088 / JCM 1222 / NCTC 11817 / S12</strain>
    </source>
</reference>
<protein>
    <recommendedName>
        <fullName evidence="1">Ribosomal RNA small subunit methyltransferase H</fullName>
        <ecNumber evidence="1">2.1.1.199</ecNumber>
    </recommendedName>
    <alternativeName>
        <fullName evidence="1">16S rRNA m(4)C1402 methyltransferase</fullName>
    </alternativeName>
    <alternativeName>
        <fullName evidence="1">rRNA (cytosine-N(4)-)-methyltransferase RsmH</fullName>
    </alternativeName>
</protein>
<dbReference type="EC" id="2.1.1.199" evidence="1"/>
<dbReference type="EMBL" id="CP001095">
    <property type="protein sequence ID" value="ACJ51950.1"/>
    <property type="molecule type" value="Genomic_DNA"/>
</dbReference>
<dbReference type="EMBL" id="AP010889">
    <property type="protein sequence ID" value="BAJ68457.1"/>
    <property type="molecule type" value="Genomic_DNA"/>
</dbReference>
<dbReference type="RefSeq" id="WP_012577223.1">
    <property type="nucleotide sequence ID" value="NC_011593.1"/>
</dbReference>
<dbReference type="SMR" id="B7GQ70"/>
<dbReference type="KEGG" id="bln:Blon_0848"/>
<dbReference type="KEGG" id="blon:BLIJ_0865"/>
<dbReference type="PATRIC" id="fig|391904.8.peg.872"/>
<dbReference type="HOGENOM" id="CLU_038422_0_0_11"/>
<dbReference type="Proteomes" id="UP000001360">
    <property type="component" value="Chromosome"/>
</dbReference>
<dbReference type="GO" id="GO:0005737">
    <property type="term" value="C:cytoplasm"/>
    <property type="evidence" value="ECO:0007669"/>
    <property type="project" value="UniProtKB-SubCell"/>
</dbReference>
<dbReference type="GO" id="GO:0071424">
    <property type="term" value="F:rRNA (cytosine-N4-)-methyltransferase activity"/>
    <property type="evidence" value="ECO:0007669"/>
    <property type="project" value="UniProtKB-UniRule"/>
</dbReference>
<dbReference type="GO" id="GO:0070475">
    <property type="term" value="P:rRNA base methylation"/>
    <property type="evidence" value="ECO:0007669"/>
    <property type="project" value="UniProtKB-UniRule"/>
</dbReference>
<dbReference type="CDD" id="cd02440">
    <property type="entry name" value="AdoMet_MTases"/>
    <property type="match status" value="1"/>
</dbReference>
<dbReference type="FunFam" id="1.10.150.170:FF:000001">
    <property type="entry name" value="Ribosomal RNA small subunit methyltransferase H"/>
    <property type="match status" value="1"/>
</dbReference>
<dbReference type="Gene3D" id="1.10.150.170">
    <property type="entry name" value="Putative methyltransferase TM0872, insert domain"/>
    <property type="match status" value="1"/>
</dbReference>
<dbReference type="Gene3D" id="3.40.50.150">
    <property type="entry name" value="Vaccinia Virus protein VP39"/>
    <property type="match status" value="1"/>
</dbReference>
<dbReference type="HAMAP" id="MF_01007">
    <property type="entry name" value="16SrRNA_methyltr_H"/>
    <property type="match status" value="1"/>
</dbReference>
<dbReference type="InterPro" id="IPR002903">
    <property type="entry name" value="RsmH"/>
</dbReference>
<dbReference type="InterPro" id="IPR023397">
    <property type="entry name" value="SAM-dep_MeTrfase_MraW_recog"/>
</dbReference>
<dbReference type="InterPro" id="IPR029063">
    <property type="entry name" value="SAM-dependent_MTases_sf"/>
</dbReference>
<dbReference type="NCBIfam" id="TIGR00006">
    <property type="entry name" value="16S rRNA (cytosine(1402)-N(4))-methyltransferase RsmH"/>
    <property type="match status" value="1"/>
</dbReference>
<dbReference type="PANTHER" id="PTHR11265:SF0">
    <property type="entry name" value="12S RRNA N4-METHYLCYTIDINE METHYLTRANSFERASE"/>
    <property type="match status" value="1"/>
</dbReference>
<dbReference type="PANTHER" id="PTHR11265">
    <property type="entry name" value="S-ADENOSYL-METHYLTRANSFERASE MRAW"/>
    <property type="match status" value="1"/>
</dbReference>
<dbReference type="Pfam" id="PF01795">
    <property type="entry name" value="Methyltransf_5"/>
    <property type="match status" value="1"/>
</dbReference>
<dbReference type="PIRSF" id="PIRSF004486">
    <property type="entry name" value="MraW"/>
    <property type="match status" value="1"/>
</dbReference>
<dbReference type="SUPFAM" id="SSF81799">
    <property type="entry name" value="Putative methyltransferase TM0872, insert domain"/>
    <property type="match status" value="1"/>
</dbReference>
<dbReference type="SUPFAM" id="SSF53335">
    <property type="entry name" value="S-adenosyl-L-methionine-dependent methyltransferases"/>
    <property type="match status" value="1"/>
</dbReference>